<sequence length="412" mass="45147">MSVPTHQQDLIALLEERGFVHQCTDRDGLAAHLAAGPATAYLGFDATADSLHVGHLQGLMLMRWLQKAGHRPLLLIGGATTRIGDPSFRDSSRPILTEAQIQANIDGIARVFSRYVELHDDSLVNNAEWLDGVGYLEFLDRVGRHFSINRLLTFDAIRQRLDREHSLSFLEFGYTLLQAYDFVELSRRRGCTLQLGGADQWANIINGVELSRRQGGAQLFGLTMPLLATSDGRKMGKSAQGAVWLNAERLAPFDFWQFWRNCDDRDVGRFLALFSELPMDEVRRLGALQGAELNEAKVVLANAATALAHGEHAARSAADAARGVFADGTRDSGLPVMKLSRARLAQGLSLTDLLLEHAIQPSRSAVRRLAAGGGLRLDGTPVSDPDAPLAGEVDGLRLSLGKKQHLHLRLED</sequence>
<feature type="chain" id="PRO_1000189319" description="Tyrosine--tRNA ligase">
    <location>
        <begin position="1"/>
        <end position="412"/>
    </location>
</feature>
<feature type="domain" description="S4 RNA-binding" evidence="1">
    <location>
        <begin position="348"/>
        <end position="411"/>
    </location>
</feature>
<feature type="short sequence motif" description="'HIGH' region">
    <location>
        <begin position="46"/>
        <end position="55"/>
    </location>
</feature>
<feature type="short sequence motif" description="'KMSKS' region">
    <location>
        <begin position="234"/>
        <end position="238"/>
    </location>
</feature>
<feature type="binding site" evidence="1">
    <location>
        <position position="41"/>
    </location>
    <ligand>
        <name>L-tyrosine</name>
        <dbReference type="ChEBI" id="CHEBI:58315"/>
    </ligand>
</feature>
<feature type="binding site" evidence="1">
    <location>
        <position position="174"/>
    </location>
    <ligand>
        <name>L-tyrosine</name>
        <dbReference type="ChEBI" id="CHEBI:58315"/>
    </ligand>
</feature>
<feature type="binding site" evidence="1">
    <location>
        <position position="178"/>
    </location>
    <ligand>
        <name>L-tyrosine</name>
        <dbReference type="ChEBI" id="CHEBI:58315"/>
    </ligand>
</feature>
<feature type="binding site" evidence="1">
    <location>
        <position position="237"/>
    </location>
    <ligand>
        <name>ATP</name>
        <dbReference type="ChEBI" id="CHEBI:30616"/>
    </ligand>
</feature>
<protein>
    <recommendedName>
        <fullName evidence="1">Tyrosine--tRNA ligase</fullName>
        <ecNumber evidence="1">6.1.1.1</ecNumber>
    </recommendedName>
    <alternativeName>
        <fullName evidence="1">Tyrosyl-tRNA synthetase</fullName>
        <shortName evidence="1">TyrRS</shortName>
    </alternativeName>
</protein>
<name>SYY_PSEA8</name>
<comment type="function">
    <text evidence="1">Catalyzes the attachment of tyrosine to tRNA(Tyr) in a two-step reaction: tyrosine is first activated by ATP to form Tyr-AMP and then transferred to the acceptor end of tRNA(Tyr).</text>
</comment>
<comment type="catalytic activity">
    <reaction evidence="1">
        <text>tRNA(Tyr) + L-tyrosine + ATP = L-tyrosyl-tRNA(Tyr) + AMP + diphosphate + H(+)</text>
        <dbReference type="Rhea" id="RHEA:10220"/>
        <dbReference type="Rhea" id="RHEA-COMP:9706"/>
        <dbReference type="Rhea" id="RHEA-COMP:9707"/>
        <dbReference type="ChEBI" id="CHEBI:15378"/>
        <dbReference type="ChEBI" id="CHEBI:30616"/>
        <dbReference type="ChEBI" id="CHEBI:33019"/>
        <dbReference type="ChEBI" id="CHEBI:58315"/>
        <dbReference type="ChEBI" id="CHEBI:78442"/>
        <dbReference type="ChEBI" id="CHEBI:78536"/>
        <dbReference type="ChEBI" id="CHEBI:456215"/>
        <dbReference type="EC" id="6.1.1.1"/>
    </reaction>
</comment>
<comment type="subunit">
    <text evidence="1">Homodimer.</text>
</comment>
<comment type="subcellular location">
    <subcellularLocation>
        <location evidence="1">Cytoplasm</location>
    </subcellularLocation>
</comment>
<comment type="similarity">
    <text evidence="1">Belongs to the class-I aminoacyl-tRNA synthetase family. TyrS type 1 subfamily.</text>
</comment>
<accession>B7V6L2</accession>
<dbReference type="EC" id="6.1.1.1" evidence="1"/>
<dbReference type="EMBL" id="FM209186">
    <property type="protein sequence ID" value="CAW25560.1"/>
    <property type="molecule type" value="Genomic_DNA"/>
</dbReference>
<dbReference type="RefSeq" id="WP_003105684.1">
    <property type="nucleotide sequence ID" value="NC_011770.1"/>
</dbReference>
<dbReference type="SMR" id="B7V6L2"/>
<dbReference type="KEGG" id="pag:PLES_08331"/>
<dbReference type="HOGENOM" id="CLU_024003_0_3_6"/>
<dbReference type="GO" id="GO:0005829">
    <property type="term" value="C:cytosol"/>
    <property type="evidence" value="ECO:0007669"/>
    <property type="project" value="TreeGrafter"/>
</dbReference>
<dbReference type="GO" id="GO:0005524">
    <property type="term" value="F:ATP binding"/>
    <property type="evidence" value="ECO:0007669"/>
    <property type="project" value="UniProtKB-UniRule"/>
</dbReference>
<dbReference type="GO" id="GO:0003723">
    <property type="term" value="F:RNA binding"/>
    <property type="evidence" value="ECO:0007669"/>
    <property type="project" value="UniProtKB-KW"/>
</dbReference>
<dbReference type="GO" id="GO:0004831">
    <property type="term" value="F:tyrosine-tRNA ligase activity"/>
    <property type="evidence" value="ECO:0007669"/>
    <property type="project" value="UniProtKB-UniRule"/>
</dbReference>
<dbReference type="GO" id="GO:0006437">
    <property type="term" value="P:tyrosyl-tRNA aminoacylation"/>
    <property type="evidence" value="ECO:0007669"/>
    <property type="project" value="UniProtKB-UniRule"/>
</dbReference>
<dbReference type="CDD" id="cd00805">
    <property type="entry name" value="TyrRS_core"/>
    <property type="match status" value="1"/>
</dbReference>
<dbReference type="FunFam" id="1.10.240.10:FF:000001">
    <property type="entry name" value="Tyrosine--tRNA ligase"/>
    <property type="match status" value="1"/>
</dbReference>
<dbReference type="Gene3D" id="3.40.50.620">
    <property type="entry name" value="HUPs"/>
    <property type="match status" value="1"/>
</dbReference>
<dbReference type="Gene3D" id="3.10.290.10">
    <property type="entry name" value="RNA-binding S4 domain"/>
    <property type="match status" value="1"/>
</dbReference>
<dbReference type="Gene3D" id="1.10.240.10">
    <property type="entry name" value="Tyrosyl-Transfer RNA Synthetase"/>
    <property type="match status" value="1"/>
</dbReference>
<dbReference type="HAMAP" id="MF_02006">
    <property type="entry name" value="Tyr_tRNA_synth_type1"/>
    <property type="match status" value="1"/>
</dbReference>
<dbReference type="InterPro" id="IPR002305">
    <property type="entry name" value="aa-tRNA-synth_Ic"/>
</dbReference>
<dbReference type="InterPro" id="IPR014729">
    <property type="entry name" value="Rossmann-like_a/b/a_fold"/>
</dbReference>
<dbReference type="InterPro" id="IPR036986">
    <property type="entry name" value="S4_RNA-bd_sf"/>
</dbReference>
<dbReference type="InterPro" id="IPR002307">
    <property type="entry name" value="Tyr-tRNA-ligase"/>
</dbReference>
<dbReference type="InterPro" id="IPR024088">
    <property type="entry name" value="Tyr-tRNA-ligase_bac-type"/>
</dbReference>
<dbReference type="InterPro" id="IPR024107">
    <property type="entry name" value="Tyr-tRNA-ligase_bac_1"/>
</dbReference>
<dbReference type="NCBIfam" id="TIGR00234">
    <property type="entry name" value="tyrS"/>
    <property type="match status" value="1"/>
</dbReference>
<dbReference type="PANTHER" id="PTHR11766:SF0">
    <property type="entry name" value="TYROSINE--TRNA LIGASE, MITOCHONDRIAL"/>
    <property type="match status" value="1"/>
</dbReference>
<dbReference type="PANTHER" id="PTHR11766">
    <property type="entry name" value="TYROSYL-TRNA SYNTHETASE"/>
    <property type="match status" value="1"/>
</dbReference>
<dbReference type="Pfam" id="PF00579">
    <property type="entry name" value="tRNA-synt_1b"/>
    <property type="match status" value="1"/>
</dbReference>
<dbReference type="PRINTS" id="PR01040">
    <property type="entry name" value="TRNASYNTHTYR"/>
</dbReference>
<dbReference type="SUPFAM" id="SSF55174">
    <property type="entry name" value="Alpha-L RNA-binding motif"/>
    <property type="match status" value="1"/>
</dbReference>
<dbReference type="SUPFAM" id="SSF52374">
    <property type="entry name" value="Nucleotidylyl transferase"/>
    <property type="match status" value="1"/>
</dbReference>
<dbReference type="PROSITE" id="PS50889">
    <property type="entry name" value="S4"/>
    <property type="match status" value="1"/>
</dbReference>
<reference key="1">
    <citation type="journal article" date="2009" name="Genome Res.">
        <title>Newly introduced genomic prophage islands are critical determinants of in vivo competitiveness in the Liverpool epidemic strain of Pseudomonas aeruginosa.</title>
        <authorList>
            <person name="Winstanley C."/>
            <person name="Langille M.G.I."/>
            <person name="Fothergill J.L."/>
            <person name="Kukavica-Ibrulj I."/>
            <person name="Paradis-Bleau C."/>
            <person name="Sanschagrin F."/>
            <person name="Thomson N.R."/>
            <person name="Winsor G.L."/>
            <person name="Quail M.A."/>
            <person name="Lennard N."/>
            <person name="Bignell A."/>
            <person name="Clarke L."/>
            <person name="Seeger K."/>
            <person name="Saunders D."/>
            <person name="Harris D."/>
            <person name="Parkhill J."/>
            <person name="Hancock R.E.W."/>
            <person name="Brinkman F.S.L."/>
            <person name="Levesque R.C."/>
        </authorList>
    </citation>
    <scope>NUCLEOTIDE SEQUENCE [LARGE SCALE GENOMIC DNA]</scope>
    <source>
        <strain>LESB58</strain>
    </source>
</reference>
<proteinExistence type="inferred from homology"/>
<organism>
    <name type="scientific">Pseudomonas aeruginosa (strain LESB58)</name>
    <dbReference type="NCBI Taxonomy" id="557722"/>
    <lineage>
        <taxon>Bacteria</taxon>
        <taxon>Pseudomonadati</taxon>
        <taxon>Pseudomonadota</taxon>
        <taxon>Gammaproteobacteria</taxon>
        <taxon>Pseudomonadales</taxon>
        <taxon>Pseudomonadaceae</taxon>
        <taxon>Pseudomonas</taxon>
    </lineage>
</organism>
<keyword id="KW-0030">Aminoacyl-tRNA synthetase</keyword>
<keyword id="KW-0067">ATP-binding</keyword>
<keyword id="KW-0963">Cytoplasm</keyword>
<keyword id="KW-0436">Ligase</keyword>
<keyword id="KW-0547">Nucleotide-binding</keyword>
<keyword id="KW-0648">Protein biosynthesis</keyword>
<keyword id="KW-0694">RNA-binding</keyword>
<gene>
    <name evidence="1" type="primary">tyrS</name>
    <name type="ordered locus">PLES_08331</name>
</gene>
<evidence type="ECO:0000255" key="1">
    <source>
        <dbReference type="HAMAP-Rule" id="MF_02006"/>
    </source>
</evidence>